<gene>
    <name evidence="1" type="primary">rraA</name>
    <name type="ordered locus">Patl_4070</name>
</gene>
<feature type="chain" id="PRO_1000013855" description="Regulator of ribonuclease activity A">
    <location>
        <begin position="1"/>
        <end position="161"/>
    </location>
</feature>
<evidence type="ECO:0000255" key="1">
    <source>
        <dbReference type="HAMAP-Rule" id="MF_00471"/>
    </source>
</evidence>
<comment type="function">
    <text evidence="1">Globally modulates RNA abundance by binding to RNase E (Rne) and regulating its endonucleolytic activity. Can modulate Rne action in a substrate-dependent manner by altering the composition of the degradosome. Modulates RNA-binding and helicase activities of the degradosome.</text>
</comment>
<comment type="subunit">
    <text evidence="1">Homotrimer. Binds to both RNA-binding sites in the C-terminal region of Rne and to RhlB.</text>
</comment>
<comment type="subcellular location">
    <subcellularLocation>
        <location evidence="1">Cytoplasm</location>
    </subcellularLocation>
</comment>
<comment type="similarity">
    <text evidence="1">Belongs to the RraA family.</text>
</comment>
<dbReference type="EMBL" id="CP000388">
    <property type="protein sequence ID" value="ABG42569.1"/>
    <property type="molecule type" value="Genomic_DNA"/>
</dbReference>
<dbReference type="RefSeq" id="WP_006991623.1">
    <property type="nucleotide sequence ID" value="NC_008228.1"/>
</dbReference>
<dbReference type="SMR" id="Q15NG9"/>
<dbReference type="STRING" id="342610.Patl_4070"/>
<dbReference type="KEGG" id="pat:Patl_4070"/>
<dbReference type="eggNOG" id="COG0684">
    <property type="taxonomic scope" value="Bacteria"/>
</dbReference>
<dbReference type="HOGENOM" id="CLU_072626_4_0_6"/>
<dbReference type="OrthoDB" id="943692at2"/>
<dbReference type="Proteomes" id="UP000001981">
    <property type="component" value="Chromosome"/>
</dbReference>
<dbReference type="GO" id="GO:0005737">
    <property type="term" value="C:cytoplasm"/>
    <property type="evidence" value="ECO:0007669"/>
    <property type="project" value="UniProtKB-SubCell"/>
</dbReference>
<dbReference type="GO" id="GO:0060698">
    <property type="term" value="F:endoribonuclease inhibitor activity"/>
    <property type="evidence" value="ECO:0007669"/>
    <property type="project" value="UniProtKB-UniRule"/>
</dbReference>
<dbReference type="GO" id="GO:0019899">
    <property type="term" value="F:enzyme binding"/>
    <property type="evidence" value="ECO:0007669"/>
    <property type="project" value="UniProtKB-UniRule"/>
</dbReference>
<dbReference type="GO" id="GO:0051252">
    <property type="term" value="P:regulation of RNA metabolic process"/>
    <property type="evidence" value="ECO:0007669"/>
    <property type="project" value="InterPro"/>
</dbReference>
<dbReference type="CDD" id="cd16841">
    <property type="entry name" value="RraA_family"/>
    <property type="match status" value="1"/>
</dbReference>
<dbReference type="Gene3D" id="3.50.30.40">
    <property type="entry name" value="Ribonuclease E inhibitor RraA/RraA-like"/>
    <property type="match status" value="1"/>
</dbReference>
<dbReference type="HAMAP" id="MF_00471">
    <property type="entry name" value="RraA"/>
    <property type="match status" value="1"/>
</dbReference>
<dbReference type="InterPro" id="IPR010203">
    <property type="entry name" value="RraA"/>
</dbReference>
<dbReference type="InterPro" id="IPR005493">
    <property type="entry name" value="RraA/RraA-like"/>
</dbReference>
<dbReference type="InterPro" id="IPR036704">
    <property type="entry name" value="RraA/RraA-like_sf"/>
</dbReference>
<dbReference type="InterPro" id="IPR014339">
    <property type="entry name" value="RraA_gpbac"/>
</dbReference>
<dbReference type="NCBIfam" id="TIGR01935">
    <property type="entry name" value="NOT-MenG"/>
    <property type="match status" value="1"/>
</dbReference>
<dbReference type="NCBIfam" id="NF006875">
    <property type="entry name" value="PRK09372.1"/>
    <property type="match status" value="1"/>
</dbReference>
<dbReference type="NCBIfam" id="TIGR02998">
    <property type="entry name" value="RraA_entero"/>
    <property type="match status" value="1"/>
</dbReference>
<dbReference type="PANTHER" id="PTHR33254">
    <property type="entry name" value="4-HYDROXY-4-METHYL-2-OXOGLUTARATE ALDOLASE 3-RELATED"/>
    <property type="match status" value="1"/>
</dbReference>
<dbReference type="PANTHER" id="PTHR33254:SF29">
    <property type="entry name" value="REGULATOR OF RIBONUCLEASE ACTIVITY A"/>
    <property type="match status" value="1"/>
</dbReference>
<dbReference type="Pfam" id="PF03737">
    <property type="entry name" value="RraA-like"/>
    <property type="match status" value="1"/>
</dbReference>
<dbReference type="SUPFAM" id="SSF89562">
    <property type="entry name" value="RraA-like"/>
    <property type="match status" value="1"/>
</dbReference>
<sequence length="161" mass="17005">MEYNTSALCDLFADSVDVVEPMFVSFGGRASFGGEITTIKCFEDKGVILKALEKPGLGKVLLIDGGGSMRRALIDSAAAQIALDNGWEGIICYGSVREVDDLEEINVGVHAIASIPVSADDQGVGEVDVAVNFGGVTFLPEDHVYADRTGIILSPEPLDVE</sequence>
<name>RRAA_PSEA6</name>
<reference key="1">
    <citation type="submission" date="2006-06" db="EMBL/GenBank/DDBJ databases">
        <title>Complete sequence of Pseudoalteromonas atlantica T6c.</title>
        <authorList>
            <consortium name="US DOE Joint Genome Institute"/>
            <person name="Copeland A."/>
            <person name="Lucas S."/>
            <person name="Lapidus A."/>
            <person name="Barry K."/>
            <person name="Detter J.C."/>
            <person name="Glavina del Rio T."/>
            <person name="Hammon N."/>
            <person name="Israni S."/>
            <person name="Dalin E."/>
            <person name="Tice H."/>
            <person name="Pitluck S."/>
            <person name="Saunders E."/>
            <person name="Brettin T."/>
            <person name="Bruce D."/>
            <person name="Han C."/>
            <person name="Tapia R."/>
            <person name="Gilna P."/>
            <person name="Schmutz J."/>
            <person name="Larimer F."/>
            <person name="Land M."/>
            <person name="Hauser L."/>
            <person name="Kyrpides N."/>
            <person name="Kim E."/>
            <person name="Karls A.C."/>
            <person name="Bartlett D."/>
            <person name="Higgins B.P."/>
            <person name="Richardson P."/>
        </authorList>
    </citation>
    <scope>NUCLEOTIDE SEQUENCE [LARGE SCALE GENOMIC DNA]</scope>
    <source>
        <strain>T6c / ATCC BAA-1087</strain>
    </source>
</reference>
<proteinExistence type="inferred from homology"/>
<protein>
    <recommendedName>
        <fullName evidence="1">Regulator of ribonuclease activity A</fullName>
    </recommendedName>
</protein>
<organism>
    <name type="scientific">Pseudoalteromonas atlantica (strain T6c / ATCC BAA-1087)</name>
    <dbReference type="NCBI Taxonomy" id="3042615"/>
    <lineage>
        <taxon>Bacteria</taxon>
        <taxon>Pseudomonadati</taxon>
        <taxon>Pseudomonadota</taxon>
        <taxon>Gammaproteobacteria</taxon>
        <taxon>Alteromonadales</taxon>
        <taxon>Alteromonadaceae</taxon>
        <taxon>Paraglaciecola</taxon>
    </lineage>
</organism>
<keyword id="KW-0963">Cytoplasm</keyword>
<accession>Q15NG9</accession>